<name>LIPA_CORU7</name>
<reference key="1">
    <citation type="journal article" date="2008" name="J. Biotechnol.">
        <title>The lifestyle of Corynebacterium urealyticum derived from its complete genome sequence established by pyrosequencing.</title>
        <authorList>
            <person name="Tauch A."/>
            <person name="Trost E."/>
            <person name="Tilker A."/>
            <person name="Ludewig U."/>
            <person name="Schneiker S."/>
            <person name="Goesmann A."/>
            <person name="Arnold W."/>
            <person name="Bekel T."/>
            <person name="Brinkrolf K."/>
            <person name="Brune I."/>
            <person name="Goetker S."/>
            <person name="Kalinowski J."/>
            <person name="Kamp P.-B."/>
            <person name="Lobo F.P."/>
            <person name="Viehoever P."/>
            <person name="Weisshaar B."/>
            <person name="Soriano F."/>
            <person name="Droege M."/>
            <person name="Puehler A."/>
        </authorList>
    </citation>
    <scope>NUCLEOTIDE SEQUENCE [LARGE SCALE GENOMIC DNA]</scope>
    <source>
        <strain>ATCC 43042 / DSM 7109</strain>
    </source>
</reference>
<dbReference type="EC" id="2.8.1.8" evidence="1"/>
<dbReference type="EMBL" id="AM942444">
    <property type="protein sequence ID" value="CAQ05209.1"/>
    <property type="molecule type" value="Genomic_DNA"/>
</dbReference>
<dbReference type="RefSeq" id="WP_012360497.1">
    <property type="nucleotide sequence ID" value="NC_010545.1"/>
</dbReference>
<dbReference type="SMR" id="B1VHG8"/>
<dbReference type="STRING" id="504474.cu1249"/>
<dbReference type="GeneID" id="60604030"/>
<dbReference type="KEGG" id="cur:cu1249"/>
<dbReference type="eggNOG" id="COG0320">
    <property type="taxonomic scope" value="Bacteria"/>
</dbReference>
<dbReference type="HOGENOM" id="CLU_033144_2_1_11"/>
<dbReference type="UniPathway" id="UPA00538">
    <property type="reaction ID" value="UER00593"/>
</dbReference>
<dbReference type="Proteomes" id="UP000001727">
    <property type="component" value="Chromosome"/>
</dbReference>
<dbReference type="GO" id="GO:0005737">
    <property type="term" value="C:cytoplasm"/>
    <property type="evidence" value="ECO:0007669"/>
    <property type="project" value="UniProtKB-SubCell"/>
</dbReference>
<dbReference type="GO" id="GO:0051539">
    <property type="term" value="F:4 iron, 4 sulfur cluster binding"/>
    <property type="evidence" value="ECO:0007669"/>
    <property type="project" value="UniProtKB-UniRule"/>
</dbReference>
<dbReference type="GO" id="GO:0016992">
    <property type="term" value="F:lipoate synthase activity"/>
    <property type="evidence" value="ECO:0007669"/>
    <property type="project" value="UniProtKB-UniRule"/>
</dbReference>
<dbReference type="GO" id="GO:0046872">
    <property type="term" value="F:metal ion binding"/>
    <property type="evidence" value="ECO:0007669"/>
    <property type="project" value="UniProtKB-KW"/>
</dbReference>
<dbReference type="CDD" id="cd01335">
    <property type="entry name" value="Radical_SAM"/>
    <property type="match status" value="1"/>
</dbReference>
<dbReference type="Gene3D" id="3.20.20.70">
    <property type="entry name" value="Aldolase class I"/>
    <property type="match status" value="1"/>
</dbReference>
<dbReference type="HAMAP" id="MF_00206">
    <property type="entry name" value="Lipoyl_synth"/>
    <property type="match status" value="1"/>
</dbReference>
<dbReference type="InterPro" id="IPR013785">
    <property type="entry name" value="Aldolase_TIM"/>
</dbReference>
<dbReference type="InterPro" id="IPR006638">
    <property type="entry name" value="Elp3/MiaA/NifB-like_rSAM"/>
</dbReference>
<dbReference type="InterPro" id="IPR031691">
    <property type="entry name" value="LIAS_N"/>
</dbReference>
<dbReference type="InterPro" id="IPR003698">
    <property type="entry name" value="Lipoyl_synth"/>
</dbReference>
<dbReference type="InterPro" id="IPR007197">
    <property type="entry name" value="rSAM"/>
</dbReference>
<dbReference type="NCBIfam" id="TIGR00510">
    <property type="entry name" value="lipA"/>
    <property type="match status" value="1"/>
</dbReference>
<dbReference type="NCBIfam" id="NF004019">
    <property type="entry name" value="PRK05481.1"/>
    <property type="match status" value="1"/>
</dbReference>
<dbReference type="NCBIfam" id="NF009544">
    <property type="entry name" value="PRK12928.1"/>
    <property type="match status" value="1"/>
</dbReference>
<dbReference type="PANTHER" id="PTHR10949">
    <property type="entry name" value="LIPOYL SYNTHASE"/>
    <property type="match status" value="1"/>
</dbReference>
<dbReference type="PANTHER" id="PTHR10949:SF0">
    <property type="entry name" value="LIPOYL SYNTHASE, MITOCHONDRIAL"/>
    <property type="match status" value="1"/>
</dbReference>
<dbReference type="Pfam" id="PF16881">
    <property type="entry name" value="LIAS_N"/>
    <property type="match status" value="1"/>
</dbReference>
<dbReference type="Pfam" id="PF04055">
    <property type="entry name" value="Radical_SAM"/>
    <property type="match status" value="1"/>
</dbReference>
<dbReference type="PIRSF" id="PIRSF005963">
    <property type="entry name" value="Lipoyl_synth"/>
    <property type="match status" value="1"/>
</dbReference>
<dbReference type="SFLD" id="SFLDF00271">
    <property type="entry name" value="lipoyl_synthase"/>
    <property type="match status" value="1"/>
</dbReference>
<dbReference type="SFLD" id="SFLDS00029">
    <property type="entry name" value="Radical_SAM"/>
    <property type="match status" value="1"/>
</dbReference>
<dbReference type="SMART" id="SM00729">
    <property type="entry name" value="Elp3"/>
    <property type="match status" value="1"/>
</dbReference>
<dbReference type="SUPFAM" id="SSF102114">
    <property type="entry name" value="Radical SAM enzymes"/>
    <property type="match status" value="1"/>
</dbReference>
<dbReference type="PROSITE" id="PS51918">
    <property type="entry name" value="RADICAL_SAM"/>
    <property type="match status" value="1"/>
</dbReference>
<keyword id="KW-0004">4Fe-4S</keyword>
<keyword id="KW-0963">Cytoplasm</keyword>
<keyword id="KW-0408">Iron</keyword>
<keyword id="KW-0411">Iron-sulfur</keyword>
<keyword id="KW-0479">Metal-binding</keyword>
<keyword id="KW-1185">Reference proteome</keyword>
<keyword id="KW-0949">S-adenosyl-L-methionine</keyword>
<keyword id="KW-0808">Transferase</keyword>
<protein>
    <recommendedName>
        <fullName evidence="1">Lipoyl synthase</fullName>
        <ecNumber evidence="1">2.8.1.8</ecNumber>
    </recommendedName>
    <alternativeName>
        <fullName evidence="1">Lip-syn</fullName>
        <shortName evidence="1">LS</shortName>
    </alternativeName>
    <alternativeName>
        <fullName evidence="1">Lipoate synthase</fullName>
    </alternativeName>
    <alternativeName>
        <fullName evidence="1">Lipoic acid synthase</fullName>
    </alternativeName>
    <alternativeName>
        <fullName evidence="1">Sulfur insertion protein LipA</fullName>
    </alternativeName>
</protein>
<organism>
    <name type="scientific">Corynebacterium urealyticum (strain ATCC 43042 / DSM 7109)</name>
    <dbReference type="NCBI Taxonomy" id="504474"/>
    <lineage>
        <taxon>Bacteria</taxon>
        <taxon>Bacillati</taxon>
        <taxon>Actinomycetota</taxon>
        <taxon>Actinomycetes</taxon>
        <taxon>Mycobacteriales</taxon>
        <taxon>Corynebacteriaceae</taxon>
        <taxon>Corynebacterium</taxon>
    </lineage>
</organism>
<feature type="chain" id="PRO_1000099596" description="Lipoyl synthase">
    <location>
        <begin position="1"/>
        <end position="347"/>
    </location>
</feature>
<feature type="domain" description="Radical SAM core" evidence="2">
    <location>
        <begin position="67"/>
        <end position="281"/>
    </location>
</feature>
<feature type="binding site" evidence="1">
    <location>
        <position position="55"/>
    </location>
    <ligand>
        <name>[4Fe-4S] cluster</name>
        <dbReference type="ChEBI" id="CHEBI:49883"/>
        <label>1</label>
    </ligand>
</feature>
<feature type="binding site" evidence="1">
    <location>
        <position position="60"/>
    </location>
    <ligand>
        <name>[4Fe-4S] cluster</name>
        <dbReference type="ChEBI" id="CHEBI:49883"/>
        <label>1</label>
    </ligand>
</feature>
<feature type="binding site" evidence="1">
    <location>
        <position position="66"/>
    </location>
    <ligand>
        <name>[4Fe-4S] cluster</name>
        <dbReference type="ChEBI" id="CHEBI:49883"/>
        <label>1</label>
    </ligand>
</feature>
<feature type="binding site" evidence="1">
    <location>
        <position position="81"/>
    </location>
    <ligand>
        <name>[4Fe-4S] cluster</name>
        <dbReference type="ChEBI" id="CHEBI:49883"/>
        <label>2</label>
        <note>4Fe-4S-S-AdoMet</note>
    </ligand>
</feature>
<feature type="binding site" evidence="1">
    <location>
        <position position="85"/>
    </location>
    <ligand>
        <name>[4Fe-4S] cluster</name>
        <dbReference type="ChEBI" id="CHEBI:49883"/>
        <label>2</label>
        <note>4Fe-4S-S-AdoMet</note>
    </ligand>
</feature>
<feature type="binding site" evidence="1">
    <location>
        <position position="88"/>
    </location>
    <ligand>
        <name>[4Fe-4S] cluster</name>
        <dbReference type="ChEBI" id="CHEBI:49883"/>
        <label>2</label>
        <note>4Fe-4S-S-AdoMet</note>
    </ligand>
</feature>
<feature type="binding site" evidence="1">
    <location>
        <position position="292"/>
    </location>
    <ligand>
        <name>[4Fe-4S] cluster</name>
        <dbReference type="ChEBI" id="CHEBI:49883"/>
        <label>1</label>
    </ligand>
</feature>
<evidence type="ECO:0000255" key="1">
    <source>
        <dbReference type="HAMAP-Rule" id="MF_00206"/>
    </source>
</evidence>
<evidence type="ECO:0000255" key="2">
    <source>
        <dbReference type="PROSITE-ProRule" id="PRU01266"/>
    </source>
</evidence>
<proteinExistence type="inferred from homology"/>
<sequence length="347" mass="39503">MTVSANGRRMLRIEAKNSQTPIEAKPRWIRTTAKMGPEYRDMKNRVTGMSLHTVCQEAGCPNIHECWEDREASFLIGGDTCSRRCDFCQIKSGKPTPLDRDEPRRVAESVREMGLKYATVTGVTRDDLDDEGAWLYAEVVRKIHELNPNTGVENLTPDFSNKPELLQIVFESQPEVFAHNLETVPRIFKRIRPAFKYERSLEVIRAAHDYGLITKSNLILGMGETEEEVVEAMRDLREAGTDILTITQYLRPTSMHHPIERWVRPEEFVAHSEAAYDMGFPAVMSGPLVRSSYRSGRLYAQAMRARGREIPENLSHLNEKLDGSTQQEATNLLDKYGASEETPVAYR</sequence>
<gene>
    <name evidence="1" type="primary">lipA</name>
    <name type="ordered locus">cu1249</name>
</gene>
<accession>B1VHG8</accession>
<comment type="function">
    <text evidence="1">Catalyzes the radical-mediated insertion of two sulfur atoms into the C-6 and C-8 positions of the octanoyl moiety bound to the lipoyl domains of lipoate-dependent enzymes, thereby converting the octanoylated domains into lipoylated derivatives.</text>
</comment>
<comment type="catalytic activity">
    <reaction evidence="1">
        <text>[[Fe-S] cluster scaffold protein carrying a second [4Fe-4S](2+) cluster] + N(6)-octanoyl-L-lysyl-[protein] + 2 oxidized [2Fe-2S]-[ferredoxin] + 2 S-adenosyl-L-methionine + 4 H(+) = [[Fe-S] cluster scaffold protein] + N(6)-[(R)-dihydrolipoyl]-L-lysyl-[protein] + 4 Fe(3+) + 2 hydrogen sulfide + 2 5'-deoxyadenosine + 2 L-methionine + 2 reduced [2Fe-2S]-[ferredoxin]</text>
        <dbReference type="Rhea" id="RHEA:16585"/>
        <dbReference type="Rhea" id="RHEA-COMP:9928"/>
        <dbReference type="Rhea" id="RHEA-COMP:10000"/>
        <dbReference type="Rhea" id="RHEA-COMP:10001"/>
        <dbReference type="Rhea" id="RHEA-COMP:10475"/>
        <dbReference type="Rhea" id="RHEA-COMP:14568"/>
        <dbReference type="Rhea" id="RHEA-COMP:14569"/>
        <dbReference type="ChEBI" id="CHEBI:15378"/>
        <dbReference type="ChEBI" id="CHEBI:17319"/>
        <dbReference type="ChEBI" id="CHEBI:29034"/>
        <dbReference type="ChEBI" id="CHEBI:29919"/>
        <dbReference type="ChEBI" id="CHEBI:33722"/>
        <dbReference type="ChEBI" id="CHEBI:33737"/>
        <dbReference type="ChEBI" id="CHEBI:33738"/>
        <dbReference type="ChEBI" id="CHEBI:57844"/>
        <dbReference type="ChEBI" id="CHEBI:59789"/>
        <dbReference type="ChEBI" id="CHEBI:78809"/>
        <dbReference type="ChEBI" id="CHEBI:83100"/>
        <dbReference type="EC" id="2.8.1.8"/>
    </reaction>
</comment>
<comment type="cofactor">
    <cofactor evidence="1">
        <name>[4Fe-4S] cluster</name>
        <dbReference type="ChEBI" id="CHEBI:49883"/>
    </cofactor>
    <text evidence="1">Binds 2 [4Fe-4S] clusters per subunit. One cluster is coordinated with 3 cysteines and an exchangeable S-adenosyl-L-methionine.</text>
</comment>
<comment type="pathway">
    <text evidence="1">Protein modification; protein lipoylation via endogenous pathway; protein N(6)-(lipoyl)lysine from octanoyl-[acyl-carrier-protein]: step 2/2.</text>
</comment>
<comment type="subcellular location">
    <subcellularLocation>
        <location evidence="1">Cytoplasm</location>
    </subcellularLocation>
</comment>
<comment type="similarity">
    <text evidence="1">Belongs to the radical SAM superfamily. Lipoyl synthase family.</text>
</comment>